<name>ALR_RALN1</name>
<dbReference type="EC" id="5.1.1.1" evidence="1"/>
<dbReference type="EMBL" id="AL646052">
    <property type="protein sequence ID" value="CAD15073.1"/>
    <property type="molecule type" value="Genomic_DNA"/>
</dbReference>
<dbReference type="RefSeq" id="WP_011001320.1">
    <property type="nucleotide sequence ID" value="NC_003295.1"/>
</dbReference>
<dbReference type="SMR" id="Q8XZM4"/>
<dbReference type="STRING" id="267608.RSc1371"/>
<dbReference type="EnsemblBacteria" id="CAD15073">
    <property type="protein sequence ID" value="CAD15073"/>
    <property type="gene ID" value="RSc1371"/>
</dbReference>
<dbReference type="KEGG" id="rso:RSc1371"/>
<dbReference type="PATRIC" id="fig|267608.8.peg.1397"/>
<dbReference type="eggNOG" id="COG0787">
    <property type="taxonomic scope" value="Bacteria"/>
</dbReference>
<dbReference type="HOGENOM" id="CLU_028393_1_0_4"/>
<dbReference type="UniPathway" id="UPA00042">
    <property type="reaction ID" value="UER00497"/>
</dbReference>
<dbReference type="Proteomes" id="UP000001436">
    <property type="component" value="Chromosome"/>
</dbReference>
<dbReference type="GO" id="GO:0005829">
    <property type="term" value="C:cytosol"/>
    <property type="evidence" value="ECO:0007669"/>
    <property type="project" value="TreeGrafter"/>
</dbReference>
<dbReference type="GO" id="GO:0008784">
    <property type="term" value="F:alanine racemase activity"/>
    <property type="evidence" value="ECO:0007669"/>
    <property type="project" value="UniProtKB-UniRule"/>
</dbReference>
<dbReference type="GO" id="GO:0030170">
    <property type="term" value="F:pyridoxal phosphate binding"/>
    <property type="evidence" value="ECO:0007669"/>
    <property type="project" value="UniProtKB-UniRule"/>
</dbReference>
<dbReference type="GO" id="GO:0030632">
    <property type="term" value="P:D-alanine biosynthetic process"/>
    <property type="evidence" value="ECO:0007669"/>
    <property type="project" value="UniProtKB-UniRule"/>
</dbReference>
<dbReference type="CDD" id="cd06827">
    <property type="entry name" value="PLPDE_III_AR_proteobact"/>
    <property type="match status" value="1"/>
</dbReference>
<dbReference type="FunFam" id="3.20.20.10:FF:000002">
    <property type="entry name" value="Alanine racemase"/>
    <property type="match status" value="1"/>
</dbReference>
<dbReference type="Gene3D" id="3.20.20.10">
    <property type="entry name" value="Alanine racemase"/>
    <property type="match status" value="1"/>
</dbReference>
<dbReference type="Gene3D" id="2.40.37.10">
    <property type="entry name" value="Lyase, Ornithine Decarboxylase, Chain A, domain 1"/>
    <property type="match status" value="1"/>
</dbReference>
<dbReference type="HAMAP" id="MF_01201">
    <property type="entry name" value="Ala_racemase"/>
    <property type="match status" value="1"/>
</dbReference>
<dbReference type="InterPro" id="IPR000821">
    <property type="entry name" value="Ala_racemase"/>
</dbReference>
<dbReference type="InterPro" id="IPR009006">
    <property type="entry name" value="Ala_racemase/Decarboxylase_C"/>
</dbReference>
<dbReference type="InterPro" id="IPR011079">
    <property type="entry name" value="Ala_racemase_C"/>
</dbReference>
<dbReference type="InterPro" id="IPR001608">
    <property type="entry name" value="Ala_racemase_N"/>
</dbReference>
<dbReference type="InterPro" id="IPR020622">
    <property type="entry name" value="Ala_racemase_pyridoxalP-BS"/>
</dbReference>
<dbReference type="InterPro" id="IPR029066">
    <property type="entry name" value="PLP-binding_barrel"/>
</dbReference>
<dbReference type="NCBIfam" id="TIGR00492">
    <property type="entry name" value="alr"/>
    <property type="match status" value="1"/>
</dbReference>
<dbReference type="PANTHER" id="PTHR30511">
    <property type="entry name" value="ALANINE RACEMASE"/>
    <property type="match status" value="1"/>
</dbReference>
<dbReference type="PANTHER" id="PTHR30511:SF0">
    <property type="entry name" value="ALANINE RACEMASE, CATABOLIC-RELATED"/>
    <property type="match status" value="1"/>
</dbReference>
<dbReference type="Pfam" id="PF00842">
    <property type="entry name" value="Ala_racemase_C"/>
    <property type="match status" value="1"/>
</dbReference>
<dbReference type="Pfam" id="PF01168">
    <property type="entry name" value="Ala_racemase_N"/>
    <property type="match status" value="1"/>
</dbReference>
<dbReference type="PRINTS" id="PR00992">
    <property type="entry name" value="ALARACEMASE"/>
</dbReference>
<dbReference type="SMART" id="SM01005">
    <property type="entry name" value="Ala_racemase_C"/>
    <property type="match status" value="1"/>
</dbReference>
<dbReference type="SUPFAM" id="SSF50621">
    <property type="entry name" value="Alanine racemase C-terminal domain-like"/>
    <property type="match status" value="1"/>
</dbReference>
<dbReference type="SUPFAM" id="SSF51419">
    <property type="entry name" value="PLP-binding barrel"/>
    <property type="match status" value="1"/>
</dbReference>
<dbReference type="PROSITE" id="PS00395">
    <property type="entry name" value="ALANINE_RACEMASE"/>
    <property type="match status" value="1"/>
</dbReference>
<keyword id="KW-0413">Isomerase</keyword>
<keyword id="KW-0663">Pyridoxal phosphate</keyword>
<keyword id="KW-1185">Reference proteome</keyword>
<sequence length="375" mass="40103">MPRPIQAVIHGPALVNNLQVVRRHAADSRVWAVIKANAYGHGIERAYEGLRQADGFGLLDLDEAVRLRQLGWQGPILLLEGFFKPEDLALVEQYRLTTTVHCEEQLRMLELARLKGPVSIQLKINTGMSRLGFAPAAYRAAWEHARAISGIGTIVHMTHFSDADGPRGIDHQLAAFEQATQGLPGEASLSNSAATLWHPRAHRDWVRPGVILYGASPTGVAADIEGTGLMPAMTLKSELIAVQDLQPGATVGYGSRFEAEQPMRIGIVACGYADGYPRHAPGWDGNYTPVLVDGVRTRMVGRVSMDMITVDLAEVPGARVGAPVTLWGQGLPIDEVAHAAGTVGYELMCALAPRVPVTVEPAGAADAGETLGKAA</sequence>
<proteinExistence type="inferred from homology"/>
<feature type="chain" id="PRO_0000114550" description="Alanine racemase">
    <location>
        <begin position="1"/>
        <end position="375"/>
    </location>
</feature>
<feature type="active site" description="Proton acceptor; specific for D-alanine" evidence="1">
    <location>
        <position position="35"/>
    </location>
</feature>
<feature type="active site" description="Proton acceptor; specific for L-alanine" evidence="1">
    <location>
        <position position="253"/>
    </location>
</feature>
<feature type="binding site" evidence="1">
    <location>
        <position position="130"/>
    </location>
    <ligand>
        <name>substrate</name>
    </ligand>
</feature>
<feature type="binding site" evidence="1">
    <location>
        <position position="305"/>
    </location>
    <ligand>
        <name>substrate</name>
    </ligand>
</feature>
<feature type="modified residue" description="N6-(pyridoxal phosphate)lysine" evidence="1">
    <location>
        <position position="35"/>
    </location>
</feature>
<reference key="1">
    <citation type="journal article" date="2002" name="Nature">
        <title>Genome sequence of the plant pathogen Ralstonia solanacearum.</title>
        <authorList>
            <person name="Salanoubat M."/>
            <person name="Genin S."/>
            <person name="Artiguenave F."/>
            <person name="Gouzy J."/>
            <person name="Mangenot S."/>
            <person name="Arlat M."/>
            <person name="Billault A."/>
            <person name="Brottier P."/>
            <person name="Camus J.-C."/>
            <person name="Cattolico L."/>
            <person name="Chandler M."/>
            <person name="Choisne N."/>
            <person name="Claudel-Renard C."/>
            <person name="Cunnac S."/>
            <person name="Demange N."/>
            <person name="Gaspin C."/>
            <person name="Lavie M."/>
            <person name="Moisan A."/>
            <person name="Robert C."/>
            <person name="Saurin W."/>
            <person name="Schiex T."/>
            <person name="Siguier P."/>
            <person name="Thebault P."/>
            <person name="Whalen M."/>
            <person name="Wincker P."/>
            <person name="Levy M."/>
            <person name="Weissenbach J."/>
            <person name="Boucher C.A."/>
        </authorList>
    </citation>
    <scope>NUCLEOTIDE SEQUENCE [LARGE SCALE GENOMIC DNA]</scope>
    <source>
        <strain>ATCC BAA-1114 / GMI1000</strain>
    </source>
</reference>
<gene>
    <name type="primary">alr</name>
    <name type="ordered locus">RSc1371</name>
    <name type="ORF">RS04748</name>
</gene>
<evidence type="ECO:0000255" key="1">
    <source>
        <dbReference type="HAMAP-Rule" id="MF_01201"/>
    </source>
</evidence>
<accession>Q8XZM4</accession>
<comment type="function">
    <text evidence="1">Catalyzes the interconversion of L-alanine and D-alanine. May also act on other amino acids.</text>
</comment>
<comment type="catalytic activity">
    <reaction evidence="1">
        <text>L-alanine = D-alanine</text>
        <dbReference type="Rhea" id="RHEA:20249"/>
        <dbReference type="ChEBI" id="CHEBI:57416"/>
        <dbReference type="ChEBI" id="CHEBI:57972"/>
        <dbReference type="EC" id="5.1.1.1"/>
    </reaction>
</comment>
<comment type="cofactor">
    <cofactor evidence="1">
        <name>pyridoxal 5'-phosphate</name>
        <dbReference type="ChEBI" id="CHEBI:597326"/>
    </cofactor>
</comment>
<comment type="pathway">
    <text evidence="1">Amino-acid biosynthesis; D-alanine biosynthesis; D-alanine from L-alanine: step 1/1.</text>
</comment>
<comment type="similarity">
    <text evidence="1">Belongs to the alanine racemase family.</text>
</comment>
<organism>
    <name type="scientific">Ralstonia nicotianae (strain ATCC BAA-1114 / GMI1000)</name>
    <name type="common">Ralstonia solanacearum</name>
    <dbReference type="NCBI Taxonomy" id="267608"/>
    <lineage>
        <taxon>Bacteria</taxon>
        <taxon>Pseudomonadati</taxon>
        <taxon>Pseudomonadota</taxon>
        <taxon>Betaproteobacteria</taxon>
        <taxon>Burkholderiales</taxon>
        <taxon>Burkholderiaceae</taxon>
        <taxon>Ralstonia</taxon>
        <taxon>Ralstonia solanacearum species complex</taxon>
    </lineage>
</organism>
<protein>
    <recommendedName>
        <fullName evidence="1">Alanine racemase</fullName>
        <ecNumber evidence="1">5.1.1.1</ecNumber>
    </recommendedName>
</protein>